<proteinExistence type="inferred from homology"/>
<name>RSMA_CLOPE</name>
<accession>Q8XHG8</accession>
<sequence>MDINEIKDIKTKELVQKYNFRFSKSLGQNFLIDDSVPRDIVNGADVCEDDLVIEIGPGVGTLTVQLLKRAKRVVAIELDSSLIPILTAELGDNPKFQLIHNDALKVDFNEIIGDEKSVKLVANLPYYVTTPIIVNLLKGGYNFKSLTIMIQKEVAERMNAEPNCKDYGALSILVQYYCNTKIVRKVPPSCFIPRPKVDSIVIRLERLEEPSVKVKNEKLFFEIVRHAFNMRRKTLWNATKNVKLPKELMEKAYEEAGIDPKRRGETLSLAEFGALSDAIDKYMNN</sequence>
<dbReference type="EC" id="2.1.1.182" evidence="1"/>
<dbReference type="EMBL" id="BA000016">
    <property type="protein sequence ID" value="BAB82223.1"/>
    <property type="molecule type" value="Genomic_DNA"/>
</dbReference>
<dbReference type="RefSeq" id="WP_003450598.1">
    <property type="nucleotide sequence ID" value="NC_003366.1"/>
</dbReference>
<dbReference type="SMR" id="Q8XHG8"/>
<dbReference type="STRING" id="195102.gene:10491851"/>
<dbReference type="GeneID" id="93000879"/>
<dbReference type="KEGG" id="cpe:CPE2517"/>
<dbReference type="HOGENOM" id="CLU_041220_0_0_9"/>
<dbReference type="Proteomes" id="UP000000818">
    <property type="component" value="Chromosome"/>
</dbReference>
<dbReference type="GO" id="GO:0005829">
    <property type="term" value="C:cytosol"/>
    <property type="evidence" value="ECO:0007669"/>
    <property type="project" value="TreeGrafter"/>
</dbReference>
<dbReference type="GO" id="GO:0052908">
    <property type="term" value="F:16S rRNA (adenine(1518)-N(6)/adenine(1519)-N(6))-dimethyltransferase activity"/>
    <property type="evidence" value="ECO:0007669"/>
    <property type="project" value="UniProtKB-EC"/>
</dbReference>
<dbReference type="GO" id="GO:0003723">
    <property type="term" value="F:RNA binding"/>
    <property type="evidence" value="ECO:0007669"/>
    <property type="project" value="UniProtKB-KW"/>
</dbReference>
<dbReference type="CDD" id="cd02440">
    <property type="entry name" value="AdoMet_MTases"/>
    <property type="match status" value="1"/>
</dbReference>
<dbReference type="FunFam" id="3.40.50.150:FF:000023">
    <property type="entry name" value="Ribosomal RNA small subunit methyltransferase A"/>
    <property type="match status" value="1"/>
</dbReference>
<dbReference type="Gene3D" id="1.10.8.100">
    <property type="entry name" value="Ribosomal RNA adenine dimethylase-like, domain 2"/>
    <property type="match status" value="1"/>
</dbReference>
<dbReference type="Gene3D" id="3.40.50.150">
    <property type="entry name" value="Vaccinia Virus protein VP39"/>
    <property type="match status" value="1"/>
</dbReference>
<dbReference type="HAMAP" id="MF_00607">
    <property type="entry name" value="16SrRNA_methyltr_A"/>
    <property type="match status" value="1"/>
</dbReference>
<dbReference type="InterPro" id="IPR001737">
    <property type="entry name" value="KsgA/Erm"/>
</dbReference>
<dbReference type="InterPro" id="IPR023165">
    <property type="entry name" value="rRNA_Ade_diMease-like_C"/>
</dbReference>
<dbReference type="InterPro" id="IPR020596">
    <property type="entry name" value="rRNA_Ade_Mease_Trfase_CS"/>
</dbReference>
<dbReference type="InterPro" id="IPR020598">
    <property type="entry name" value="rRNA_Ade_methylase_Trfase_N"/>
</dbReference>
<dbReference type="InterPro" id="IPR011530">
    <property type="entry name" value="rRNA_adenine_dimethylase"/>
</dbReference>
<dbReference type="InterPro" id="IPR029063">
    <property type="entry name" value="SAM-dependent_MTases_sf"/>
</dbReference>
<dbReference type="NCBIfam" id="TIGR00755">
    <property type="entry name" value="ksgA"/>
    <property type="match status" value="1"/>
</dbReference>
<dbReference type="PANTHER" id="PTHR11727">
    <property type="entry name" value="DIMETHYLADENOSINE TRANSFERASE"/>
    <property type="match status" value="1"/>
</dbReference>
<dbReference type="PANTHER" id="PTHR11727:SF7">
    <property type="entry name" value="DIMETHYLADENOSINE TRANSFERASE-RELATED"/>
    <property type="match status" value="1"/>
</dbReference>
<dbReference type="Pfam" id="PF00398">
    <property type="entry name" value="RrnaAD"/>
    <property type="match status" value="1"/>
</dbReference>
<dbReference type="SMART" id="SM00650">
    <property type="entry name" value="rADc"/>
    <property type="match status" value="1"/>
</dbReference>
<dbReference type="SUPFAM" id="SSF53335">
    <property type="entry name" value="S-adenosyl-L-methionine-dependent methyltransferases"/>
    <property type="match status" value="1"/>
</dbReference>
<dbReference type="PROSITE" id="PS01131">
    <property type="entry name" value="RRNA_A_DIMETH"/>
    <property type="match status" value="1"/>
</dbReference>
<dbReference type="PROSITE" id="PS51689">
    <property type="entry name" value="SAM_RNA_A_N6_MT"/>
    <property type="match status" value="1"/>
</dbReference>
<comment type="function">
    <text evidence="1">Specifically dimethylates two adjacent adenosines (A1518 and A1519) in the loop of a conserved hairpin near the 3'-end of 16S rRNA in the 30S particle. May play a critical role in biogenesis of 30S subunits.</text>
</comment>
<comment type="catalytic activity">
    <reaction evidence="1">
        <text>adenosine(1518)/adenosine(1519) in 16S rRNA + 4 S-adenosyl-L-methionine = N(6)-dimethyladenosine(1518)/N(6)-dimethyladenosine(1519) in 16S rRNA + 4 S-adenosyl-L-homocysteine + 4 H(+)</text>
        <dbReference type="Rhea" id="RHEA:19609"/>
        <dbReference type="Rhea" id="RHEA-COMP:10232"/>
        <dbReference type="Rhea" id="RHEA-COMP:10233"/>
        <dbReference type="ChEBI" id="CHEBI:15378"/>
        <dbReference type="ChEBI" id="CHEBI:57856"/>
        <dbReference type="ChEBI" id="CHEBI:59789"/>
        <dbReference type="ChEBI" id="CHEBI:74411"/>
        <dbReference type="ChEBI" id="CHEBI:74493"/>
        <dbReference type="EC" id="2.1.1.182"/>
    </reaction>
</comment>
<comment type="subcellular location">
    <subcellularLocation>
        <location evidence="1">Cytoplasm</location>
    </subcellularLocation>
</comment>
<comment type="similarity">
    <text evidence="1">Belongs to the class I-like SAM-binding methyltransferase superfamily. rRNA adenine N(6)-methyltransferase family. RsmA subfamily.</text>
</comment>
<feature type="chain" id="PRO_0000101516" description="Ribosomal RNA small subunit methyltransferase A">
    <location>
        <begin position="1"/>
        <end position="285"/>
    </location>
</feature>
<feature type="binding site" evidence="1">
    <location>
        <position position="29"/>
    </location>
    <ligand>
        <name>S-adenosyl-L-methionine</name>
        <dbReference type="ChEBI" id="CHEBI:59789"/>
    </ligand>
</feature>
<feature type="binding site" evidence="1">
    <location>
        <position position="31"/>
    </location>
    <ligand>
        <name>S-adenosyl-L-methionine</name>
        <dbReference type="ChEBI" id="CHEBI:59789"/>
    </ligand>
</feature>
<feature type="binding site" evidence="1">
    <location>
        <position position="56"/>
    </location>
    <ligand>
        <name>S-adenosyl-L-methionine</name>
        <dbReference type="ChEBI" id="CHEBI:59789"/>
    </ligand>
</feature>
<feature type="binding site" evidence="1">
    <location>
        <position position="77"/>
    </location>
    <ligand>
        <name>S-adenosyl-L-methionine</name>
        <dbReference type="ChEBI" id="CHEBI:59789"/>
    </ligand>
</feature>
<feature type="binding site" evidence="1">
    <location>
        <position position="102"/>
    </location>
    <ligand>
        <name>S-adenosyl-L-methionine</name>
        <dbReference type="ChEBI" id="CHEBI:59789"/>
    </ligand>
</feature>
<feature type="binding site" evidence="1">
    <location>
        <position position="123"/>
    </location>
    <ligand>
        <name>S-adenosyl-L-methionine</name>
        <dbReference type="ChEBI" id="CHEBI:59789"/>
    </ligand>
</feature>
<gene>
    <name evidence="1" type="primary">rsmA</name>
    <name evidence="1" type="synonym">ksgA</name>
    <name type="ordered locus">CPE2517</name>
</gene>
<protein>
    <recommendedName>
        <fullName evidence="1">Ribosomal RNA small subunit methyltransferase A</fullName>
        <ecNumber evidence="1">2.1.1.182</ecNumber>
    </recommendedName>
    <alternativeName>
        <fullName evidence="1">16S rRNA (adenine(1518)-N(6)/adenine(1519)-N(6))-dimethyltransferase</fullName>
    </alternativeName>
    <alternativeName>
        <fullName evidence="1">16S rRNA dimethyladenosine transferase</fullName>
    </alternativeName>
    <alternativeName>
        <fullName evidence="1">16S rRNA dimethylase</fullName>
    </alternativeName>
    <alternativeName>
        <fullName evidence="1">S-adenosylmethionine-6-N', N'-adenosyl(rRNA) dimethyltransferase</fullName>
    </alternativeName>
</protein>
<reference key="1">
    <citation type="journal article" date="2002" name="Proc. Natl. Acad. Sci. U.S.A.">
        <title>Complete genome sequence of Clostridium perfringens, an anaerobic flesh-eater.</title>
        <authorList>
            <person name="Shimizu T."/>
            <person name="Ohtani K."/>
            <person name="Hirakawa H."/>
            <person name="Ohshima K."/>
            <person name="Yamashita A."/>
            <person name="Shiba T."/>
            <person name="Ogasawara N."/>
            <person name="Hattori M."/>
            <person name="Kuhara S."/>
            <person name="Hayashi H."/>
        </authorList>
    </citation>
    <scope>NUCLEOTIDE SEQUENCE [LARGE SCALE GENOMIC DNA]</scope>
    <source>
        <strain>13 / Type A</strain>
    </source>
</reference>
<evidence type="ECO:0000255" key="1">
    <source>
        <dbReference type="HAMAP-Rule" id="MF_00607"/>
    </source>
</evidence>
<keyword id="KW-0963">Cytoplasm</keyword>
<keyword id="KW-0489">Methyltransferase</keyword>
<keyword id="KW-1185">Reference proteome</keyword>
<keyword id="KW-0694">RNA-binding</keyword>
<keyword id="KW-0698">rRNA processing</keyword>
<keyword id="KW-0949">S-adenosyl-L-methionine</keyword>
<keyword id="KW-0808">Transferase</keyword>
<organism>
    <name type="scientific">Clostridium perfringens (strain 13 / Type A)</name>
    <dbReference type="NCBI Taxonomy" id="195102"/>
    <lineage>
        <taxon>Bacteria</taxon>
        <taxon>Bacillati</taxon>
        <taxon>Bacillota</taxon>
        <taxon>Clostridia</taxon>
        <taxon>Eubacteriales</taxon>
        <taxon>Clostridiaceae</taxon>
        <taxon>Clostridium</taxon>
    </lineage>
</organism>